<feature type="chain" id="PRO_1000187621" description="Tyrosine recombinase XerC">
    <location>
        <begin position="1"/>
        <end position="294"/>
    </location>
</feature>
<feature type="domain" description="Core-binding (CB)" evidence="3">
    <location>
        <begin position="1"/>
        <end position="85"/>
    </location>
</feature>
<feature type="domain" description="Tyr recombinase" evidence="2">
    <location>
        <begin position="106"/>
        <end position="283"/>
    </location>
</feature>
<feature type="active site" evidence="1">
    <location>
        <position position="145"/>
    </location>
</feature>
<feature type="active site" evidence="1">
    <location>
        <position position="169"/>
    </location>
</feature>
<feature type="active site" evidence="1">
    <location>
        <position position="235"/>
    </location>
</feature>
<feature type="active site" evidence="1">
    <location>
        <position position="238"/>
    </location>
</feature>
<feature type="active site" evidence="1">
    <location>
        <position position="261"/>
    </location>
</feature>
<feature type="active site" description="O-(3'-phospho-DNA)-tyrosine intermediate" evidence="1">
    <location>
        <position position="270"/>
    </location>
</feature>
<proteinExistence type="inferred from homology"/>
<reference key="1">
    <citation type="journal article" date="2010" name="J. Bacteriol.">
        <title>Whole genome sequences of two Xylella fastidiosa strains (M12 and M23) causing almond leaf scorch disease in California.</title>
        <authorList>
            <person name="Chen J."/>
            <person name="Xie G."/>
            <person name="Han S."/>
            <person name="Chertkov O."/>
            <person name="Sims D."/>
            <person name="Civerolo E.L."/>
        </authorList>
    </citation>
    <scope>NUCLEOTIDE SEQUENCE [LARGE SCALE GENOMIC DNA]</scope>
    <source>
        <strain>M23</strain>
    </source>
</reference>
<dbReference type="EMBL" id="CP001011">
    <property type="protein sequence ID" value="ACB92177.1"/>
    <property type="molecule type" value="Genomic_DNA"/>
</dbReference>
<dbReference type="RefSeq" id="WP_004089050.1">
    <property type="nucleotide sequence ID" value="NC_010577.1"/>
</dbReference>
<dbReference type="SMR" id="B2IA18"/>
<dbReference type="KEGG" id="xfn:XfasM23_0736"/>
<dbReference type="HOGENOM" id="CLU_027562_9_0_6"/>
<dbReference type="Proteomes" id="UP000001698">
    <property type="component" value="Chromosome"/>
</dbReference>
<dbReference type="GO" id="GO:0005737">
    <property type="term" value="C:cytoplasm"/>
    <property type="evidence" value="ECO:0007669"/>
    <property type="project" value="UniProtKB-SubCell"/>
</dbReference>
<dbReference type="GO" id="GO:0003677">
    <property type="term" value="F:DNA binding"/>
    <property type="evidence" value="ECO:0007669"/>
    <property type="project" value="UniProtKB-KW"/>
</dbReference>
<dbReference type="GO" id="GO:0009037">
    <property type="term" value="F:tyrosine-based site-specific recombinase activity"/>
    <property type="evidence" value="ECO:0007669"/>
    <property type="project" value="UniProtKB-UniRule"/>
</dbReference>
<dbReference type="GO" id="GO:0051301">
    <property type="term" value="P:cell division"/>
    <property type="evidence" value="ECO:0007669"/>
    <property type="project" value="UniProtKB-KW"/>
</dbReference>
<dbReference type="GO" id="GO:0007059">
    <property type="term" value="P:chromosome segregation"/>
    <property type="evidence" value="ECO:0007669"/>
    <property type="project" value="UniProtKB-UniRule"/>
</dbReference>
<dbReference type="GO" id="GO:0006313">
    <property type="term" value="P:DNA transposition"/>
    <property type="evidence" value="ECO:0007669"/>
    <property type="project" value="UniProtKB-UniRule"/>
</dbReference>
<dbReference type="CDD" id="cd00798">
    <property type="entry name" value="INT_XerDC_C"/>
    <property type="match status" value="1"/>
</dbReference>
<dbReference type="Gene3D" id="1.10.150.130">
    <property type="match status" value="1"/>
</dbReference>
<dbReference type="Gene3D" id="1.10.443.10">
    <property type="entry name" value="Intergrase catalytic core"/>
    <property type="match status" value="1"/>
</dbReference>
<dbReference type="HAMAP" id="MF_01808">
    <property type="entry name" value="Recomb_XerC_XerD"/>
    <property type="match status" value="1"/>
</dbReference>
<dbReference type="InterPro" id="IPR044068">
    <property type="entry name" value="CB"/>
</dbReference>
<dbReference type="InterPro" id="IPR011010">
    <property type="entry name" value="DNA_brk_join_enz"/>
</dbReference>
<dbReference type="InterPro" id="IPR013762">
    <property type="entry name" value="Integrase-like_cat_sf"/>
</dbReference>
<dbReference type="InterPro" id="IPR002104">
    <property type="entry name" value="Integrase_catalytic"/>
</dbReference>
<dbReference type="InterPro" id="IPR010998">
    <property type="entry name" value="Integrase_recombinase_N"/>
</dbReference>
<dbReference type="InterPro" id="IPR004107">
    <property type="entry name" value="Integrase_SAM-like_N"/>
</dbReference>
<dbReference type="InterPro" id="IPR011931">
    <property type="entry name" value="Recomb_XerC"/>
</dbReference>
<dbReference type="InterPro" id="IPR023009">
    <property type="entry name" value="Tyrosine_recombinase_XerC/XerD"/>
</dbReference>
<dbReference type="InterPro" id="IPR050090">
    <property type="entry name" value="Tyrosine_recombinase_XerCD"/>
</dbReference>
<dbReference type="NCBIfam" id="NF001399">
    <property type="entry name" value="PRK00283.1"/>
    <property type="match status" value="1"/>
</dbReference>
<dbReference type="NCBIfam" id="TIGR02224">
    <property type="entry name" value="recomb_XerC"/>
    <property type="match status" value="1"/>
</dbReference>
<dbReference type="PANTHER" id="PTHR30349">
    <property type="entry name" value="PHAGE INTEGRASE-RELATED"/>
    <property type="match status" value="1"/>
</dbReference>
<dbReference type="PANTHER" id="PTHR30349:SF81">
    <property type="entry name" value="TYROSINE RECOMBINASE XERC"/>
    <property type="match status" value="1"/>
</dbReference>
<dbReference type="Pfam" id="PF02899">
    <property type="entry name" value="Phage_int_SAM_1"/>
    <property type="match status" value="1"/>
</dbReference>
<dbReference type="Pfam" id="PF00589">
    <property type="entry name" value="Phage_integrase"/>
    <property type="match status" value="1"/>
</dbReference>
<dbReference type="SUPFAM" id="SSF56349">
    <property type="entry name" value="DNA breaking-rejoining enzymes"/>
    <property type="match status" value="1"/>
</dbReference>
<dbReference type="PROSITE" id="PS51900">
    <property type="entry name" value="CB"/>
    <property type="match status" value="1"/>
</dbReference>
<dbReference type="PROSITE" id="PS51898">
    <property type="entry name" value="TYR_RECOMBINASE"/>
    <property type="match status" value="1"/>
</dbReference>
<organism>
    <name type="scientific">Xylella fastidiosa (strain M23)</name>
    <dbReference type="NCBI Taxonomy" id="405441"/>
    <lineage>
        <taxon>Bacteria</taxon>
        <taxon>Pseudomonadati</taxon>
        <taxon>Pseudomonadota</taxon>
        <taxon>Gammaproteobacteria</taxon>
        <taxon>Lysobacterales</taxon>
        <taxon>Lysobacteraceae</taxon>
        <taxon>Xylella</taxon>
    </lineage>
</organism>
<gene>
    <name evidence="1" type="primary">xerC</name>
    <name type="ordered locus">XfasM23_0736</name>
</gene>
<comment type="function">
    <text evidence="1">Site-specific tyrosine recombinase, which acts by catalyzing the cutting and rejoining of the recombining DNA molecules. The XerC-XerD complex is essential to convert dimers of the bacterial chromosome into monomers to permit their segregation at cell division. It also contributes to the segregational stability of plasmids.</text>
</comment>
<comment type="subunit">
    <text evidence="1">Forms a cyclic heterotetrameric complex composed of two molecules of XerC and two molecules of XerD.</text>
</comment>
<comment type="subcellular location">
    <subcellularLocation>
        <location evidence="1">Cytoplasm</location>
    </subcellularLocation>
</comment>
<comment type="similarity">
    <text evidence="1">Belongs to the 'phage' integrase family. XerC subfamily.</text>
</comment>
<accession>B2IA18</accession>
<keyword id="KW-0131">Cell cycle</keyword>
<keyword id="KW-0132">Cell division</keyword>
<keyword id="KW-0159">Chromosome partition</keyword>
<keyword id="KW-0963">Cytoplasm</keyword>
<keyword id="KW-0229">DNA integration</keyword>
<keyword id="KW-0233">DNA recombination</keyword>
<keyword id="KW-0238">DNA-binding</keyword>
<protein>
    <recommendedName>
        <fullName evidence="1">Tyrosine recombinase XerC</fullName>
    </recommendedName>
</protein>
<evidence type="ECO:0000255" key="1">
    <source>
        <dbReference type="HAMAP-Rule" id="MF_01808"/>
    </source>
</evidence>
<evidence type="ECO:0000255" key="2">
    <source>
        <dbReference type="PROSITE-ProRule" id="PRU01246"/>
    </source>
</evidence>
<evidence type="ECO:0000255" key="3">
    <source>
        <dbReference type="PROSITE-ProRule" id="PRU01248"/>
    </source>
</evidence>
<sequence length="294" mass="32434">MSRLVEDFFAFLHVERGMSSHTLDAYRRDIGALIAWGGQQAVGEVVALDRAQLQAFVSAEHRRGLSAKSLQRRLSACRGFYTWLVKRGHIAVNPAAGLRAPKALRKLPRILDADEAVSFVQIPTDTPLGLRDRALLELFYSSGLRLSELCGLRWDGLDLDAGLVSVLGKGSRQRVVPVGSYALSALREWCASSGGGAQQPVFPGRYGGPISARAVQVRIKQLAQRQGMAKHVHPHMLRHSFASHLLESSGDLRGVQELLGHADITTTQIYTHLDFQYLSKVYDAAHPRARRKAR</sequence>
<name>XERC_XYLF2</name>